<comment type="function">
    <text evidence="1">Catalyzes the conversion of dethiobiotin (DTB) to biotin by the insertion of a sulfur atom into dethiobiotin via a radical-based mechanism.</text>
</comment>
<comment type="catalytic activity">
    <reaction evidence="1">
        <text>(4R,5S)-dethiobiotin + (sulfur carrier)-SH + 2 reduced [2Fe-2S]-[ferredoxin] + 2 S-adenosyl-L-methionine = (sulfur carrier)-H + biotin + 2 5'-deoxyadenosine + 2 L-methionine + 2 oxidized [2Fe-2S]-[ferredoxin]</text>
        <dbReference type="Rhea" id="RHEA:22060"/>
        <dbReference type="Rhea" id="RHEA-COMP:10000"/>
        <dbReference type="Rhea" id="RHEA-COMP:10001"/>
        <dbReference type="Rhea" id="RHEA-COMP:14737"/>
        <dbReference type="Rhea" id="RHEA-COMP:14739"/>
        <dbReference type="ChEBI" id="CHEBI:17319"/>
        <dbReference type="ChEBI" id="CHEBI:29917"/>
        <dbReference type="ChEBI" id="CHEBI:33737"/>
        <dbReference type="ChEBI" id="CHEBI:33738"/>
        <dbReference type="ChEBI" id="CHEBI:57586"/>
        <dbReference type="ChEBI" id="CHEBI:57844"/>
        <dbReference type="ChEBI" id="CHEBI:59789"/>
        <dbReference type="ChEBI" id="CHEBI:64428"/>
        <dbReference type="ChEBI" id="CHEBI:149473"/>
        <dbReference type="EC" id="2.8.1.6"/>
    </reaction>
</comment>
<comment type="cofactor">
    <cofactor evidence="1">
        <name>[4Fe-4S] cluster</name>
        <dbReference type="ChEBI" id="CHEBI:49883"/>
    </cofactor>
    <text evidence="1">Binds 1 [4Fe-4S] cluster. The cluster is coordinated with 3 cysteines and an exchangeable S-adenosyl-L-methionine.</text>
</comment>
<comment type="cofactor">
    <cofactor evidence="1">
        <name>[2Fe-2S] cluster</name>
        <dbReference type="ChEBI" id="CHEBI:190135"/>
    </cofactor>
    <text evidence="1">Binds 1 [2Fe-2S] cluster. The cluster is coordinated with 3 cysteines and 1 arginine.</text>
</comment>
<comment type="pathway">
    <text evidence="1">Cofactor biosynthesis; biotin biosynthesis; biotin from 7,8-diaminononanoate: step 2/2.</text>
</comment>
<comment type="subunit">
    <text evidence="1">Homodimer.</text>
</comment>
<comment type="similarity">
    <text evidence="1">Belongs to the radical SAM superfamily. Biotin synthase family.</text>
</comment>
<proteinExistence type="inferred from homology"/>
<dbReference type="EC" id="2.8.1.6" evidence="1"/>
<dbReference type="EMBL" id="CP000489">
    <property type="protein sequence ID" value="ABL69534.1"/>
    <property type="molecule type" value="Genomic_DNA"/>
</dbReference>
<dbReference type="RefSeq" id="WP_011747752.1">
    <property type="nucleotide sequence ID" value="NC_008686.1"/>
</dbReference>
<dbReference type="SMR" id="A1B1Z0"/>
<dbReference type="STRING" id="318586.Pden_1433"/>
<dbReference type="EnsemblBacteria" id="ABL69534">
    <property type="protein sequence ID" value="ABL69534"/>
    <property type="gene ID" value="Pden_1433"/>
</dbReference>
<dbReference type="GeneID" id="93449859"/>
<dbReference type="KEGG" id="pde:Pden_1433"/>
<dbReference type="eggNOG" id="COG0502">
    <property type="taxonomic scope" value="Bacteria"/>
</dbReference>
<dbReference type="HOGENOM" id="CLU_033172_1_2_5"/>
<dbReference type="OrthoDB" id="9786826at2"/>
<dbReference type="UniPathway" id="UPA00078">
    <property type="reaction ID" value="UER00162"/>
</dbReference>
<dbReference type="Proteomes" id="UP000000361">
    <property type="component" value="Chromosome 1"/>
</dbReference>
<dbReference type="GO" id="GO:0051537">
    <property type="term" value="F:2 iron, 2 sulfur cluster binding"/>
    <property type="evidence" value="ECO:0007669"/>
    <property type="project" value="UniProtKB-KW"/>
</dbReference>
<dbReference type="GO" id="GO:0051539">
    <property type="term" value="F:4 iron, 4 sulfur cluster binding"/>
    <property type="evidence" value="ECO:0007669"/>
    <property type="project" value="UniProtKB-KW"/>
</dbReference>
<dbReference type="GO" id="GO:0004076">
    <property type="term" value="F:biotin synthase activity"/>
    <property type="evidence" value="ECO:0007669"/>
    <property type="project" value="UniProtKB-UniRule"/>
</dbReference>
<dbReference type="GO" id="GO:0005506">
    <property type="term" value="F:iron ion binding"/>
    <property type="evidence" value="ECO:0007669"/>
    <property type="project" value="UniProtKB-UniRule"/>
</dbReference>
<dbReference type="GO" id="GO:0009102">
    <property type="term" value="P:biotin biosynthetic process"/>
    <property type="evidence" value="ECO:0007669"/>
    <property type="project" value="UniProtKB-UniRule"/>
</dbReference>
<dbReference type="CDD" id="cd01335">
    <property type="entry name" value="Radical_SAM"/>
    <property type="match status" value="1"/>
</dbReference>
<dbReference type="Gene3D" id="3.20.20.70">
    <property type="entry name" value="Aldolase class I"/>
    <property type="match status" value="1"/>
</dbReference>
<dbReference type="HAMAP" id="MF_01694">
    <property type="entry name" value="BioB"/>
    <property type="match status" value="1"/>
</dbReference>
<dbReference type="InterPro" id="IPR013785">
    <property type="entry name" value="Aldolase_TIM"/>
</dbReference>
<dbReference type="InterPro" id="IPR010722">
    <property type="entry name" value="BATS_dom"/>
</dbReference>
<dbReference type="InterPro" id="IPR002684">
    <property type="entry name" value="Biotin_synth/BioAB"/>
</dbReference>
<dbReference type="InterPro" id="IPR024177">
    <property type="entry name" value="Biotin_synthase"/>
</dbReference>
<dbReference type="InterPro" id="IPR006638">
    <property type="entry name" value="Elp3/MiaA/NifB-like_rSAM"/>
</dbReference>
<dbReference type="InterPro" id="IPR007197">
    <property type="entry name" value="rSAM"/>
</dbReference>
<dbReference type="NCBIfam" id="TIGR00433">
    <property type="entry name" value="bioB"/>
    <property type="match status" value="1"/>
</dbReference>
<dbReference type="PANTHER" id="PTHR22976">
    <property type="entry name" value="BIOTIN SYNTHASE"/>
    <property type="match status" value="1"/>
</dbReference>
<dbReference type="PANTHER" id="PTHR22976:SF2">
    <property type="entry name" value="BIOTIN SYNTHASE, MITOCHONDRIAL"/>
    <property type="match status" value="1"/>
</dbReference>
<dbReference type="Pfam" id="PF06968">
    <property type="entry name" value="BATS"/>
    <property type="match status" value="1"/>
</dbReference>
<dbReference type="Pfam" id="PF04055">
    <property type="entry name" value="Radical_SAM"/>
    <property type="match status" value="1"/>
</dbReference>
<dbReference type="PIRSF" id="PIRSF001619">
    <property type="entry name" value="Biotin_synth"/>
    <property type="match status" value="1"/>
</dbReference>
<dbReference type="SFLD" id="SFLDF00272">
    <property type="entry name" value="biotin_synthase"/>
    <property type="match status" value="1"/>
</dbReference>
<dbReference type="SFLD" id="SFLDG01278">
    <property type="entry name" value="biotin_synthase_like"/>
    <property type="match status" value="1"/>
</dbReference>
<dbReference type="SMART" id="SM00876">
    <property type="entry name" value="BATS"/>
    <property type="match status" value="1"/>
</dbReference>
<dbReference type="SMART" id="SM00729">
    <property type="entry name" value="Elp3"/>
    <property type="match status" value="1"/>
</dbReference>
<dbReference type="SUPFAM" id="SSF102114">
    <property type="entry name" value="Radical SAM enzymes"/>
    <property type="match status" value="1"/>
</dbReference>
<dbReference type="PROSITE" id="PS51918">
    <property type="entry name" value="RADICAL_SAM"/>
    <property type="match status" value="1"/>
</dbReference>
<gene>
    <name evidence="1" type="primary">bioB1</name>
    <name type="ordered locus">Pden_1433</name>
</gene>
<name>BIOB1_PARDP</name>
<protein>
    <recommendedName>
        <fullName evidence="1">Biotin synthase 1</fullName>
        <ecNumber evidence="1">2.8.1.6</ecNumber>
    </recommendedName>
</protein>
<evidence type="ECO:0000255" key="1">
    <source>
        <dbReference type="HAMAP-Rule" id="MF_01694"/>
    </source>
</evidence>
<evidence type="ECO:0000255" key="2">
    <source>
        <dbReference type="PROSITE-ProRule" id="PRU01266"/>
    </source>
</evidence>
<organism>
    <name type="scientific">Paracoccus denitrificans (strain Pd 1222)</name>
    <dbReference type="NCBI Taxonomy" id="318586"/>
    <lineage>
        <taxon>Bacteria</taxon>
        <taxon>Pseudomonadati</taxon>
        <taxon>Pseudomonadota</taxon>
        <taxon>Alphaproteobacteria</taxon>
        <taxon>Rhodobacterales</taxon>
        <taxon>Paracoccaceae</taxon>
        <taxon>Paracoccus</taxon>
    </lineage>
</organism>
<sequence length="324" mass="35023">MIRTDWTMAEAWAIHALPFADLMHRAQTLHRAHFDPNAIETASLLSIKTGGCPEDCGYCSQSAHHDTGVKATKLMGTEEVLAAARRAKASGAQRFCMGAAWRSPKDRDMDKLCDMVRGVAELGLETCMTLGMLSPEQVARLKAAGLDFYNHNIDTSPEYYAQIASTRTMENRLDTVEQVRKGGIKVCCGGILGMGEAEEDRIAMLVTLATLPAHPDSVPVNLWNEIEGVPVQARAQAVDPFALVRIVALARILMPASVVRLSAGRTGMSDELQALCFLAGANSIFVGDQLLTTGNPAAWKDQDLLSRLGMHIAPAQARPRVAAE</sequence>
<accession>A1B1Z0</accession>
<reference key="1">
    <citation type="submission" date="2006-12" db="EMBL/GenBank/DDBJ databases">
        <title>Complete sequence of chromosome 1 of Paracoccus denitrificans PD1222.</title>
        <authorList>
            <person name="Copeland A."/>
            <person name="Lucas S."/>
            <person name="Lapidus A."/>
            <person name="Barry K."/>
            <person name="Detter J.C."/>
            <person name="Glavina del Rio T."/>
            <person name="Hammon N."/>
            <person name="Israni S."/>
            <person name="Dalin E."/>
            <person name="Tice H."/>
            <person name="Pitluck S."/>
            <person name="Munk A.C."/>
            <person name="Brettin T."/>
            <person name="Bruce D."/>
            <person name="Han C."/>
            <person name="Tapia R."/>
            <person name="Gilna P."/>
            <person name="Schmutz J."/>
            <person name="Larimer F."/>
            <person name="Land M."/>
            <person name="Hauser L."/>
            <person name="Kyrpides N."/>
            <person name="Lykidis A."/>
            <person name="Spiro S."/>
            <person name="Richardson D.J."/>
            <person name="Moir J.W.B."/>
            <person name="Ferguson S.J."/>
            <person name="van Spanning R.J.M."/>
            <person name="Richardson P."/>
        </authorList>
    </citation>
    <scope>NUCLEOTIDE SEQUENCE [LARGE SCALE GENOMIC DNA]</scope>
    <source>
        <strain>Pd 1222</strain>
    </source>
</reference>
<feature type="chain" id="PRO_0000381515" description="Biotin synthase 1">
    <location>
        <begin position="1"/>
        <end position="324"/>
    </location>
</feature>
<feature type="domain" description="Radical SAM core" evidence="2">
    <location>
        <begin position="37"/>
        <end position="256"/>
    </location>
</feature>
<feature type="binding site" evidence="1">
    <location>
        <position position="52"/>
    </location>
    <ligand>
        <name>[4Fe-4S] cluster</name>
        <dbReference type="ChEBI" id="CHEBI:49883"/>
        <note>4Fe-4S-S-AdoMet</note>
    </ligand>
</feature>
<feature type="binding site" evidence="1">
    <location>
        <position position="56"/>
    </location>
    <ligand>
        <name>[4Fe-4S] cluster</name>
        <dbReference type="ChEBI" id="CHEBI:49883"/>
        <note>4Fe-4S-S-AdoMet</note>
    </ligand>
</feature>
<feature type="binding site" evidence="1">
    <location>
        <position position="59"/>
    </location>
    <ligand>
        <name>[4Fe-4S] cluster</name>
        <dbReference type="ChEBI" id="CHEBI:49883"/>
        <note>4Fe-4S-S-AdoMet</note>
    </ligand>
</feature>
<feature type="binding site" evidence="1">
    <location>
        <position position="96"/>
    </location>
    <ligand>
        <name>[2Fe-2S] cluster</name>
        <dbReference type="ChEBI" id="CHEBI:190135"/>
    </ligand>
</feature>
<feature type="binding site" evidence="1">
    <location>
        <position position="127"/>
    </location>
    <ligand>
        <name>[2Fe-2S] cluster</name>
        <dbReference type="ChEBI" id="CHEBI:190135"/>
    </ligand>
</feature>
<feature type="binding site" evidence="1">
    <location>
        <position position="187"/>
    </location>
    <ligand>
        <name>[2Fe-2S] cluster</name>
        <dbReference type="ChEBI" id="CHEBI:190135"/>
    </ligand>
</feature>
<feature type="binding site" evidence="1">
    <location>
        <position position="260"/>
    </location>
    <ligand>
        <name>[2Fe-2S] cluster</name>
        <dbReference type="ChEBI" id="CHEBI:190135"/>
    </ligand>
</feature>
<keyword id="KW-0001">2Fe-2S</keyword>
<keyword id="KW-0004">4Fe-4S</keyword>
<keyword id="KW-0093">Biotin biosynthesis</keyword>
<keyword id="KW-0408">Iron</keyword>
<keyword id="KW-0411">Iron-sulfur</keyword>
<keyword id="KW-0479">Metal-binding</keyword>
<keyword id="KW-1185">Reference proteome</keyword>
<keyword id="KW-0949">S-adenosyl-L-methionine</keyword>
<keyword id="KW-0808">Transferase</keyword>